<name>HIS7_NOVAD</name>
<gene>
    <name evidence="1" type="primary">hisB</name>
    <name type="ordered locus">Saro_1006</name>
</gene>
<protein>
    <recommendedName>
        <fullName evidence="1">Imidazoleglycerol-phosphate dehydratase</fullName>
        <shortName evidence="1">IGPD</shortName>
        <ecNumber evidence="1">4.2.1.19</ecNumber>
    </recommendedName>
</protein>
<accession>Q2G9M2</accession>
<proteinExistence type="inferred from homology"/>
<comment type="catalytic activity">
    <reaction evidence="1">
        <text>D-erythro-1-(imidazol-4-yl)glycerol 3-phosphate = 3-(imidazol-4-yl)-2-oxopropyl phosphate + H2O</text>
        <dbReference type="Rhea" id="RHEA:11040"/>
        <dbReference type="ChEBI" id="CHEBI:15377"/>
        <dbReference type="ChEBI" id="CHEBI:57766"/>
        <dbReference type="ChEBI" id="CHEBI:58278"/>
        <dbReference type="EC" id="4.2.1.19"/>
    </reaction>
</comment>
<comment type="pathway">
    <text evidence="1">Amino-acid biosynthesis; L-histidine biosynthesis; L-histidine from 5-phospho-alpha-D-ribose 1-diphosphate: step 6/9.</text>
</comment>
<comment type="subcellular location">
    <subcellularLocation>
        <location evidence="1">Cytoplasm</location>
    </subcellularLocation>
</comment>
<comment type="similarity">
    <text evidence="1">Belongs to the imidazoleglycerol-phosphate dehydratase family.</text>
</comment>
<sequence>MRTGSITRKTEETDIAVSVNLDGTGTYKVDTGIGFLDHMIEQFSRHSLIDIECRVKGDLHVDQHHTTEDSAIALGQAISQALGDKKGITRYGHTYSPMDEALCRVALDISGRPVLVWKAAFTQPRLGEMDTELFEHWFQSISQAAGITLHIESLYGSNNHHIIEGIYKGFARAMRAAIAIDPRKADAVPSTKGILGG</sequence>
<organism>
    <name type="scientific">Novosphingobium aromaticivorans (strain ATCC 700278 / DSM 12444 / CCUG 56034 / CIP 105152 / NBRC 16084 / F199)</name>
    <dbReference type="NCBI Taxonomy" id="279238"/>
    <lineage>
        <taxon>Bacteria</taxon>
        <taxon>Pseudomonadati</taxon>
        <taxon>Pseudomonadota</taxon>
        <taxon>Alphaproteobacteria</taxon>
        <taxon>Sphingomonadales</taxon>
        <taxon>Sphingomonadaceae</taxon>
        <taxon>Novosphingobium</taxon>
    </lineage>
</organism>
<feature type="chain" id="PRO_1000010316" description="Imidazoleglycerol-phosphate dehydratase">
    <location>
        <begin position="1"/>
        <end position="197"/>
    </location>
</feature>
<keyword id="KW-0028">Amino-acid biosynthesis</keyword>
<keyword id="KW-0963">Cytoplasm</keyword>
<keyword id="KW-0368">Histidine biosynthesis</keyword>
<keyword id="KW-0456">Lyase</keyword>
<keyword id="KW-1185">Reference proteome</keyword>
<evidence type="ECO:0000255" key="1">
    <source>
        <dbReference type="HAMAP-Rule" id="MF_00076"/>
    </source>
</evidence>
<dbReference type="EC" id="4.2.1.19" evidence="1"/>
<dbReference type="EMBL" id="CP000248">
    <property type="protein sequence ID" value="ABD25451.1"/>
    <property type="molecule type" value="Genomic_DNA"/>
</dbReference>
<dbReference type="RefSeq" id="WP_011444665.1">
    <property type="nucleotide sequence ID" value="NC_007794.1"/>
</dbReference>
<dbReference type="SMR" id="Q2G9M2"/>
<dbReference type="STRING" id="279238.Saro_1006"/>
<dbReference type="KEGG" id="nar:Saro_1006"/>
<dbReference type="eggNOG" id="COG0131">
    <property type="taxonomic scope" value="Bacteria"/>
</dbReference>
<dbReference type="HOGENOM" id="CLU_044308_3_0_5"/>
<dbReference type="UniPathway" id="UPA00031">
    <property type="reaction ID" value="UER00011"/>
</dbReference>
<dbReference type="Proteomes" id="UP000009134">
    <property type="component" value="Chromosome"/>
</dbReference>
<dbReference type="GO" id="GO:0005737">
    <property type="term" value="C:cytoplasm"/>
    <property type="evidence" value="ECO:0007669"/>
    <property type="project" value="UniProtKB-SubCell"/>
</dbReference>
<dbReference type="GO" id="GO:0004424">
    <property type="term" value="F:imidazoleglycerol-phosphate dehydratase activity"/>
    <property type="evidence" value="ECO:0007669"/>
    <property type="project" value="UniProtKB-UniRule"/>
</dbReference>
<dbReference type="GO" id="GO:0000105">
    <property type="term" value="P:L-histidine biosynthetic process"/>
    <property type="evidence" value="ECO:0007669"/>
    <property type="project" value="UniProtKB-UniRule"/>
</dbReference>
<dbReference type="CDD" id="cd07914">
    <property type="entry name" value="IGPD"/>
    <property type="match status" value="1"/>
</dbReference>
<dbReference type="FunFam" id="3.30.230.40:FF:000001">
    <property type="entry name" value="Imidazoleglycerol-phosphate dehydratase HisB"/>
    <property type="match status" value="1"/>
</dbReference>
<dbReference type="FunFam" id="3.30.230.40:FF:000003">
    <property type="entry name" value="Imidazoleglycerol-phosphate dehydratase HisB"/>
    <property type="match status" value="1"/>
</dbReference>
<dbReference type="Gene3D" id="3.30.230.40">
    <property type="entry name" value="Imidazole glycerol phosphate dehydratase, domain 1"/>
    <property type="match status" value="2"/>
</dbReference>
<dbReference type="HAMAP" id="MF_00076">
    <property type="entry name" value="HisB"/>
    <property type="match status" value="1"/>
</dbReference>
<dbReference type="InterPro" id="IPR038494">
    <property type="entry name" value="IGPD_sf"/>
</dbReference>
<dbReference type="InterPro" id="IPR000807">
    <property type="entry name" value="ImidazoleglycerolP_deHydtase"/>
</dbReference>
<dbReference type="InterPro" id="IPR020565">
    <property type="entry name" value="ImidazoleglycerP_deHydtase_CS"/>
</dbReference>
<dbReference type="InterPro" id="IPR020568">
    <property type="entry name" value="Ribosomal_Su5_D2-typ_SF"/>
</dbReference>
<dbReference type="NCBIfam" id="NF002109">
    <property type="entry name" value="PRK00951.1-5"/>
    <property type="match status" value="1"/>
</dbReference>
<dbReference type="NCBIfam" id="NF002111">
    <property type="entry name" value="PRK00951.2-1"/>
    <property type="match status" value="1"/>
</dbReference>
<dbReference type="NCBIfam" id="NF002114">
    <property type="entry name" value="PRK00951.2-4"/>
    <property type="match status" value="1"/>
</dbReference>
<dbReference type="PANTHER" id="PTHR23133:SF2">
    <property type="entry name" value="IMIDAZOLEGLYCEROL-PHOSPHATE DEHYDRATASE"/>
    <property type="match status" value="1"/>
</dbReference>
<dbReference type="PANTHER" id="PTHR23133">
    <property type="entry name" value="IMIDAZOLEGLYCEROL-PHOSPHATE DEHYDRATASE HIS7"/>
    <property type="match status" value="1"/>
</dbReference>
<dbReference type="Pfam" id="PF00475">
    <property type="entry name" value="IGPD"/>
    <property type="match status" value="1"/>
</dbReference>
<dbReference type="SUPFAM" id="SSF54211">
    <property type="entry name" value="Ribosomal protein S5 domain 2-like"/>
    <property type="match status" value="2"/>
</dbReference>
<dbReference type="PROSITE" id="PS00954">
    <property type="entry name" value="IGP_DEHYDRATASE_1"/>
    <property type="match status" value="1"/>
</dbReference>
<dbReference type="PROSITE" id="PS00955">
    <property type="entry name" value="IGP_DEHYDRATASE_2"/>
    <property type="match status" value="1"/>
</dbReference>
<reference key="1">
    <citation type="submission" date="2006-01" db="EMBL/GenBank/DDBJ databases">
        <title>Complete sequence of Novosphingobium aromaticivorans DSM 12444.</title>
        <authorList>
            <consortium name="US DOE Joint Genome Institute"/>
            <person name="Copeland A."/>
            <person name="Lucas S."/>
            <person name="Lapidus A."/>
            <person name="Barry K."/>
            <person name="Detter J.C."/>
            <person name="Glavina T."/>
            <person name="Hammon N."/>
            <person name="Israni S."/>
            <person name="Pitluck S."/>
            <person name="Chain P."/>
            <person name="Malfatti S."/>
            <person name="Shin M."/>
            <person name="Vergez L."/>
            <person name="Schmutz J."/>
            <person name="Larimer F."/>
            <person name="Land M."/>
            <person name="Kyrpides N."/>
            <person name="Ivanova N."/>
            <person name="Fredrickson J."/>
            <person name="Balkwill D."/>
            <person name="Romine M.F."/>
            <person name="Richardson P."/>
        </authorList>
    </citation>
    <scope>NUCLEOTIDE SEQUENCE [LARGE SCALE GENOMIC DNA]</scope>
    <source>
        <strain>ATCC 700278 / DSM 12444 / CCUG 56034 / CIP 105152 / NBRC 16084 / F199</strain>
    </source>
</reference>